<comment type="function">
    <text evidence="1">Seed storage protein. Not integrated in the gluten polymer through disulfide bonds, unless incorporated by reduction and reoxidation during dough making. Increases dough strength and bread volume, but decreases dough stability when added into a base wheat flour (By similarity).</text>
</comment>
<comment type="developmental stage">
    <text evidence="3">Expressed in developing grains.</text>
</comment>
<comment type="PTM">
    <text evidence="4">Contains 7 disulfide bonds.</text>
</comment>
<comment type="miscellaneous">
    <text>Encoded by chromosome 7D.</text>
</comment>
<comment type="similarity">
    <text evidence="4">Belongs to the prolamin family.</text>
</comment>
<name>AVLA1_WHEAT</name>
<accession>Q2A784</accession>
<sequence>MKTMFLLALLAFTATSAVAQLYTTCSQGYGQCQQQPQPQPQPQPQMNTCAAFLQQCSQTPHVQTQMWQASGCQLVRQQCCQPLAQISEQARCQAVCSVAQIIMRQQQGQSFGQPQQQVPVEIMRMVLQTLPLMCRVNIPQYCTTTPCSTITPAIYSIPMTATCAGGAC</sequence>
<feature type="signal peptide" evidence="2">
    <location>
        <begin position="1"/>
        <end position="19"/>
    </location>
</feature>
<feature type="chain" id="PRO_5000076740" description="Avenin-like a1">
    <location>
        <begin position="20"/>
        <end position="168"/>
    </location>
</feature>
<evidence type="ECO:0000250" key="1"/>
<evidence type="ECO:0000255" key="2"/>
<evidence type="ECO:0000269" key="3">
    <source ref="2"/>
</evidence>
<evidence type="ECO:0000305" key="4"/>
<proteinExistence type="evidence at transcript level"/>
<gene>
    <name type="primary">AVNLA</name>
</gene>
<protein>
    <recommendedName>
        <fullName>Avenin-like a1</fullName>
    </recommendedName>
    <alternativeName>
        <fullName>LMW-gliadin 2482</fullName>
        <shortName>LMGli2482</shortName>
        <shortName>TaAvlike-a1</shortName>
    </alternativeName>
</protein>
<reference key="1">
    <citation type="journal article" date="2003" name="Theor. Appl. Genet.">
        <title>The characterisation and mapping of a family of LMW-gliadin genes: effects on dough properties and bread volume.</title>
        <authorList>
            <person name="Clarke B.C."/>
            <person name="Phongkham T."/>
            <person name="Gianibelli M.C."/>
            <person name="Beasley H."/>
            <person name="Bekes F."/>
        </authorList>
    </citation>
    <scope>NUCLEOTIDE SEQUENCE [GENOMIC DNA / MRNA]</scope>
    <source>
        <strain>cv. Wyuna</strain>
    </source>
</reference>
<reference key="2">
    <citation type="journal article" date="2006" name="J. Cereal Sci.">
        <title>Transcriptome analysis reveals differentially expressed storage protein transcripts in seeds of Aegilops and wheat.</title>
        <authorList>
            <person name="Kan Y."/>
            <person name="Wan Y."/>
            <person name="Beaudoin F."/>
            <person name="Leader D.J."/>
            <person name="Edwards K."/>
            <person name="Poole R."/>
            <person name="Wang D."/>
            <person name="Mitchell R.A.C."/>
            <person name="Shewry P.R."/>
        </authorList>
    </citation>
    <scope>NUCLEOTIDE SEQUENCE [MRNA]</scope>
    <scope>DEVELOPMENTAL STAGE</scope>
    <source>
        <strain>cv. Cadenza</strain>
    </source>
</reference>
<organism>
    <name type="scientific">Triticum aestivum</name>
    <name type="common">Wheat</name>
    <dbReference type="NCBI Taxonomy" id="4565"/>
    <lineage>
        <taxon>Eukaryota</taxon>
        <taxon>Viridiplantae</taxon>
        <taxon>Streptophyta</taxon>
        <taxon>Embryophyta</taxon>
        <taxon>Tracheophyta</taxon>
        <taxon>Spermatophyta</taxon>
        <taxon>Magnoliopsida</taxon>
        <taxon>Liliopsida</taxon>
        <taxon>Poales</taxon>
        <taxon>Poaceae</taxon>
        <taxon>BOP clade</taxon>
        <taxon>Pooideae</taxon>
        <taxon>Triticodae</taxon>
        <taxon>Triticeae</taxon>
        <taxon>Triticinae</taxon>
        <taxon>Triticum</taxon>
    </lineage>
</organism>
<dbReference type="EMBL" id="AM087940">
    <property type="protein sequence ID" value="CAJ32654.1"/>
    <property type="molecule type" value="mRNA"/>
</dbReference>
<dbReference type="STRING" id="4565.Q2A784"/>
<dbReference type="EnsemblPlants" id="TraesARI7D03G04355300.1">
    <property type="protein sequence ID" value="TraesARI7D03G04355300.1.CDS1"/>
    <property type="gene ID" value="TraesARI7D03G04355300"/>
</dbReference>
<dbReference type="EnsemblPlants" id="TraesCAD_scaffold_012981_01G000500.1">
    <property type="protein sequence ID" value="TraesCAD_scaffold_012981_01G000500.1"/>
    <property type="gene ID" value="TraesCAD_scaffold_012981_01G000500"/>
</dbReference>
<dbReference type="EnsemblPlants" id="TraesCLE_scaffold_012212_01G000900.1">
    <property type="protein sequence ID" value="TraesCLE_scaffold_012212_01G000900.1"/>
    <property type="gene ID" value="TraesCLE_scaffold_012212_01G000900"/>
</dbReference>
<dbReference type="EnsemblPlants" id="TraesCS7D02G032000.1">
    <property type="protein sequence ID" value="TraesCS7D02G032000.1.cds1"/>
    <property type="gene ID" value="TraesCS7D02G032000"/>
</dbReference>
<dbReference type="EnsemblPlants" id="TraesCS7D03G0073000.1">
    <property type="protein sequence ID" value="TraesCS7D03G0073000.1.CDS1"/>
    <property type="gene ID" value="TraesCS7D03G0073000"/>
</dbReference>
<dbReference type="EnsemblPlants" id="TraesJAG7D03G04263700.1">
    <property type="protein sequence ID" value="TraesJAG7D03G04263700.1.CDS1"/>
    <property type="gene ID" value="TraesJAG7D03G04263700"/>
</dbReference>
<dbReference type="EnsemblPlants" id="TraesJUL7D03G04323870.1">
    <property type="protein sequence ID" value="TraesJUL7D03G04323870.1.CDS1"/>
    <property type="gene ID" value="TraesJUL7D03G04323870"/>
</dbReference>
<dbReference type="EnsemblPlants" id="TraesKAR7D01G0013550.1">
    <property type="protein sequence ID" value="cds.TraesKAR7D01G0013550.1"/>
    <property type="gene ID" value="TraesKAR7D01G0013550"/>
</dbReference>
<dbReference type="EnsemblPlants" id="TraesLAC7D03G04227220.1">
    <property type="protein sequence ID" value="TraesLAC7D03G04227220.1.CDS1"/>
    <property type="gene ID" value="TraesLAC7D03G04227220"/>
</dbReference>
<dbReference type="EnsemblPlants" id="TraesLDM7D03G04286150.1">
    <property type="protein sequence ID" value="TraesLDM7D03G04286150.1.CDS1"/>
    <property type="gene ID" value="TraesLDM7D03G04286150"/>
</dbReference>
<dbReference type="EnsemblPlants" id="TraesMAC7D03G04272670.1">
    <property type="protein sequence ID" value="TraesMAC7D03G04272670.1.CDS1"/>
    <property type="gene ID" value="TraesMAC7D03G04272670"/>
</dbReference>
<dbReference type="EnsemblPlants" id="TraesNOR7D03G04328850.1">
    <property type="protein sequence ID" value="TraesNOR7D03G04328850.1.CDS1"/>
    <property type="gene ID" value="TraesNOR7D03G04328850"/>
</dbReference>
<dbReference type="EnsemblPlants" id="TraesPARA_EIv1.0_2510350.1">
    <property type="protein sequence ID" value="TraesPARA_EIv1.0_2510350.1.CDS1"/>
    <property type="gene ID" value="TraesPARA_EIv1.0_2510350"/>
</dbReference>
<dbReference type="EnsemblPlants" id="TraesRN7D0100070400.1">
    <property type="protein sequence ID" value="TraesRN7D0100070400.1"/>
    <property type="gene ID" value="TraesRN7D0100070400"/>
</dbReference>
<dbReference type="EnsemblPlants" id="TraesROB_scaffold_019062_01G000300.1">
    <property type="protein sequence ID" value="TraesROB_scaffold_019062_01G000300.1"/>
    <property type="gene ID" value="TraesROB_scaffold_019062_01G000300"/>
</dbReference>
<dbReference type="EnsemblPlants" id="TraesSTA7D03G04274080.1">
    <property type="protein sequence ID" value="TraesSTA7D03G04274080.1.CDS1"/>
    <property type="gene ID" value="TraesSTA7D03G04274080"/>
</dbReference>
<dbReference type="EnsemblPlants" id="TraesSYM7D03G04333800.1">
    <property type="protein sequence ID" value="TraesSYM7D03G04333800.1.CDS1"/>
    <property type="gene ID" value="TraesSYM7D03G04333800"/>
</dbReference>
<dbReference type="EnsemblPlants" id="TraesWEE_scaffold_056785_01G000500.1">
    <property type="protein sequence ID" value="TraesWEE_scaffold_056785_01G000500.1"/>
    <property type="gene ID" value="TraesWEE_scaffold_056785_01G000500"/>
</dbReference>
<dbReference type="Gramene" id="TraesARI7D03G04355300.1">
    <property type="protein sequence ID" value="TraesARI7D03G04355300.1.CDS1"/>
    <property type="gene ID" value="TraesARI7D03G04355300"/>
</dbReference>
<dbReference type="Gramene" id="TraesCAD_scaffold_012981_01G000500.1">
    <property type="protein sequence ID" value="TraesCAD_scaffold_012981_01G000500.1"/>
    <property type="gene ID" value="TraesCAD_scaffold_012981_01G000500"/>
</dbReference>
<dbReference type="Gramene" id="TraesCLE_scaffold_012212_01G000900.1">
    <property type="protein sequence ID" value="TraesCLE_scaffold_012212_01G000900.1"/>
    <property type="gene ID" value="TraesCLE_scaffold_012212_01G000900"/>
</dbReference>
<dbReference type="Gramene" id="TraesCS7D02G032000.1">
    <property type="protein sequence ID" value="TraesCS7D02G032000.1.cds1"/>
    <property type="gene ID" value="TraesCS7D02G032000"/>
</dbReference>
<dbReference type="Gramene" id="TraesCS7D03G0073000.1">
    <property type="protein sequence ID" value="TraesCS7D03G0073000.1.CDS1"/>
    <property type="gene ID" value="TraesCS7D03G0073000"/>
</dbReference>
<dbReference type="Gramene" id="TraesJAG7D03G04263700.1">
    <property type="protein sequence ID" value="TraesJAG7D03G04263700.1.CDS1"/>
    <property type="gene ID" value="TraesJAG7D03G04263700"/>
</dbReference>
<dbReference type="Gramene" id="TraesJUL7D03G04323870.1">
    <property type="protein sequence ID" value="TraesJUL7D03G04323870.1.CDS1"/>
    <property type="gene ID" value="TraesJUL7D03G04323870"/>
</dbReference>
<dbReference type="Gramene" id="TraesKAR7D01G0013550.1">
    <property type="protein sequence ID" value="cds.TraesKAR7D01G0013550.1"/>
    <property type="gene ID" value="TraesKAR7D01G0013550"/>
</dbReference>
<dbReference type="Gramene" id="TraesLAC7D03G04227220.1">
    <property type="protein sequence ID" value="TraesLAC7D03G04227220.1.CDS1"/>
    <property type="gene ID" value="TraesLAC7D03G04227220"/>
</dbReference>
<dbReference type="Gramene" id="TraesLDM7D03G04286150.1">
    <property type="protein sequence ID" value="TraesLDM7D03G04286150.1.CDS1"/>
    <property type="gene ID" value="TraesLDM7D03G04286150"/>
</dbReference>
<dbReference type="Gramene" id="TraesMAC7D03G04272670.1">
    <property type="protein sequence ID" value="TraesMAC7D03G04272670.1.CDS1"/>
    <property type="gene ID" value="TraesMAC7D03G04272670"/>
</dbReference>
<dbReference type="Gramene" id="TraesNOR7D03G04328850.1">
    <property type="protein sequence ID" value="TraesNOR7D03G04328850.1.CDS1"/>
    <property type="gene ID" value="TraesNOR7D03G04328850"/>
</dbReference>
<dbReference type="Gramene" id="TraesPARA_EIv1.0_2510350.1">
    <property type="protein sequence ID" value="TraesPARA_EIv1.0_2510350.1.CDS1"/>
    <property type="gene ID" value="TraesPARA_EIv1.0_2510350"/>
</dbReference>
<dbReference type="Gramene" id="TraesRN7D0100070400.1">
    <property type="protein sequence ID" value="TraesRN7D0100070400.1"/>
    <property type="gene ID" value="TraesRN7D0100070400"/>
</dbReference>
<dbReference type="Gramene" id="TraesROB_scaffold_019062_01G000300.1">
    <property type="protein sequence ID" value="TraesROB_scaffold_019062_01G000300.1"/>
    <property type="gene ID" value="TraesROB_scaffold_019062_01G000300"/>
</dbReference>
<dbReference type="Gramene" id="TraesSTA7D03G04274080.1">
    <property type="protein sequence ID" value="TraesSTA7D03G04274080.1.CDS1"/>
    <property type="gene ID" value="TraesSTA7D03G04274080"/>
</dbReference>
<dbReference type="Gramene" id="TraesSYM7D03G04333800.1">
    <property type="protein sequence ID" value="TraesSYM7D03G04333800.1.CDS1"/>
    <property type="gene ID" value="TraesSYM7D03G04333800"/>
</dbReference>
<dbReference type="Gramene" id="TraesWEE_scaffold_056785_01G000500.1">
    <property type="protein sequence ID" value="TraesWEE_scaffold_056785_01G000500.1"/>
    <property type="gene ID" value="TraesWEE_scaffold_056785_01G000500"/>
</dbReference>
<dbReference type="OMA" id="TQMWQAS"/>
<dbReference type="OrthoDB" id="668503at2759"/>
<dbReference type="Proteomes" id="UP000019116">
    <property type="component" value="Chromosome 7D"/>
</dbReference>
<dbReference type="GO" id="GO:0045735">
    <property type="term" value="F:nutrient reservoir activity"/>
    <property type="evidence" value="ECO:0007669"/>
    <property type="project" value="UniProtKB-KW"/>
</dbReference>
<dbReference type="CDD" id="cd00261">
    <property type="entry name" value="AAI_SS"/>
    <property type="match status" value="1"/>
</dbReference>
<dbReference type="Gene3D" id="1.10.110.10">
    <property type="entry name" value="Plant lipid-transfer and hydrophobic proteins"/>
    <property type="match status" value="1"/>
</dbReference>
<dbReference type="InterPro" id="IPR036312">
    <property type="entry name" value="Bifun_inhib/LTP/seed_sf"/>
</dbReference>
<dbReference type="InterPro" id="IPR016140">
    <property type="entry name" value="Bifunc_inhib/LTP/seed_store"/>
</dbReference>
<dbReference type="InterPro" id="IPR001954">
    <property type="entry name" value="Glia_glutenin"/>
</dbReference>
<dbReference type="PANTHER" id="PTHR33454">
    <property type="entry name" value="PROLAMIN PPROL 14P"/>
    <property type="match status" value="1"/>
</dbReference>
<dbReference type="PANTHER" id="PTHR33454:SF19">
    <property type="entry name" value="PROLAMIN PPROL 14P"/>
    <property type="match status" value="1"/>
</dbReference>
<dbReference type="Pfam" id="PF13016">
    <property type="entry name" value="Gliadin"/>
    <property type="match status" value="1"/>
</dbReference>
<dbReference type="PRINTS" id="PR00208">
    <property type="entry name" value="GLIADGLUTEN"/>
</dbReference>
<dbReference type="SUPFAM" id="SSF47699">
    <property type="entry name" value="Bifunctional inhibitor/lipid-transfer protein/seed storage 2S albumin"/>
    <property type="match status" value="1"/>
</dbReference>
<keyword id="KW-1015">Disulfide bond</keyword>
<keyword id="KW-1185">Reference proteome</keyword>
<keyword id="KW-0708">Seed storage protein</keyword>
<keyword id="KW-0732">Signal</keyword>
<keyword id="KW-0758">Storage protein</keyword>